<gene>
    <name evidence="1" type="primary">arnA</name>
    <name type="ordered locus">EcolC_1394</name>
</gene>
<keyword id="KW-0046">Antibiotic resistance</keyword>
<keyword id="KW-0441">Lipid A biosynthesis</keyword>
<keyword id="KW-0444">Lipid biosynthesis</keyword>
<keyword id="KW-0443">Lipid metabolism</keyword>
<keyword id="KW-0448">Lipopolysaccharide biosynthesis</keyword>
<keyword id="KW-0511">Multifunctional enzyme</keyword>
<keyword id="KW-0520">NAD</keyword>
<keyword id="KW-0560">Oxidoreductase</keyword>
<keyword id="KW-0808">Transferase</keyword>
<name>ARNA_ECOLC</name>
<reference key="1">
    <citation type="submission" date="2008-02" db="EMBL/GenBank/DDBJ databases">
        <title>Complete sequence of Escherichia coli C str. ATCC 8739.</title>
        <authorList>
            <person name="Copeland A."/>
            <person name="Lucas S."/>
            <person name="Lapidus A."/>
            <person name="Glavina del Rio T."/>
            <person name="Dalin E."/>
            <person name="Tice H."/>
            <person name="Bruce D."/>
            <person name="Goodwin L."/>
            <person name="Pitluck S."/>
            <person name="Kiss H."/>
            <person name="Brettin T."/>
            <person name="Detter J.C."/>
            <person name="Han C."/>
            <person name="Kuske C.R."/>
            <person name="Schmutz J."/>
            <person name="Larimer F."/>
            <person name="Land M."/>
            <person name="Hauser L."/>
            <person name="Kyrpides N."/>
            <person name="Mikhailova N."/>
            <person name="Ingram L."/>
            <person name="Richardson P."/>
        </authorList>
    </citation>
    <scope>NUCLEOTIDE SEQUENCE [LARGE SCALE GENOMIC DNA]</scope>
    <source>
        <strain>ATCC 8739 / DSM 1576 / NBRC 3972 / NCIMB 8545 / WDCM 00012 / Crooks</strain>
    </source>
</reference>
<dbReference type="EC" id="2.1.2.13" evidence="1"/>
<dbReference type="EC" id="1.1.1.305" evidence="1"/>
<dbReference type="EMBL" id="CP000946">
    <property type="protein sequence ID" value="ACA77058.1"/>
    <property type="molecule type" value="Genomic_DNA"/>
</dbReference>
<dbReference type="RefSeq" id="WP_000860273.1">
    <property type="nucleotide sequence ID" value="NZ_MTFT01000028.1"/>
</dbReference>
<dbReference type="SMR" id="B1IXT2"/>
<dbReference type="KEGG" id="ecl:EcolC_1394"/>
<dbReference type="HOGENOM" id="CLU_007383_23_1_6"/>
<dbReference type="UniPathway" id="UPA00030"/>
<dbReference type="UniPathway" id="UPA00032">
    <property type="reaction ID" value="UER00492"/>
</dbReference>
<dbReference type="UniPathway" id="UPA00032">
    <property type="reaction ID" value="UER00494"/>
</dbReference>
<dbReference type="GO" id="GO:0016020">
    <property type="term" value="C:membrane"/>
    <property type="evidence" value="ECO:0007669"/>
    <property type="project" value="GOC"/>
</dbReference>
<dbReference type="GO" id="GO:0016831">
    <property type="term" value="F:carboxy-lyase activity"/>
    <property type="evidence" value="ECO:0007669"/>
    <property type="project" value="InterPro"/>
</dbReference>
<dbReference type="GO" id="GO:0099619">
    <property type="term" value="F:UDP-4-amino-4-deoxy-L-arabinose formyltransferase activity"/>
    <property type="evidence" value="ECO:0007669"/>
    <property type="project" value="UniProtKB-EC"/>
</dbReference>
<dbReference type="GO" id="GO:0099618">
    <property type="term" value="F:UDP-glucuronate dehydrogenase activity"/>
    <property type="evidence" value="ECO:0007669"/>
    <property type="project" value="UniProtKB-EC"/>
</dbReference>
<dbReference type="GO" id="GO:0009245">
    <property type="term" value="P:lipid A biosynthetic process"/>
    <property type="evidence" value="ECO:0007669"/>
    <property type="project" value="UniProtKB-KW"/>
</dbReference>
<dbReference type="GO" id="GO:0009103">
    <property type="term" value="P:lipopolysaccharide biosynthetic process"/>
    <property type="evidence" value="ECO:0007669"/>
    <property type="project" value="UniProtKB-UniRule"/>
</dbReference>
<dbReference type="GO" id="GO:0046677">
    <property type="term" value="P:response to antibiotic"/>
    <property type="evidence" value="ECO:0007669"/>
    <property type="project" value="UniProtKB-KW"/>
</dbReference>
<dbReference type="CDD" id="cd08702">
    <property type="entry name" value="Arna_FMT_C"/>
    <property type="match status" value="1"/>
</dbReference>
<dbReference type="CDD" id="cd05257">
    <property type="entry name" value="Arna_like_SDR_e"/>
    <property type="match status" value="1"/>
</dbReference>
<dbReference type="CDD" id="cd08644">
    <property type="entry name" value="FMT_core_ArnA_N"/>
    <property type="match status" value="1"/>
</dbReference>
<dbReference type="FunFam" id="3.40.50.12230:FF:000002">
    <property type="entry name" value="Bifunctional polymyxin resistance protein ArnA"/>
    <property type="match status" value="1"/>
</dbReference>
<dbReference type="FunFam" id="3.40.50.720:FF:000197">
    <property type="entry name" value="Bifunctional polymyxin resistance protein ArnA"/>
    <property type="match status" value="1"/>
</dbReference>
<dbReference type="Gene3D" id="3.40.50.12230">
    <property type="match status" value="1"/>
</dbReference>
<dbReference type="Gene3D" id="3.40.50.720">
    <property type="entry name" value="NAD(P)-binding Rossmann-like Domain"/>
    <property type="match status" value="1"/>
</dbReference>
<dbReference type="HAMAP" id="MF_01166">
    <property type="entry name" value="ArnA"/>
    <property type="match status" value="1"/>
</dbReference>
<dbReference type="InterPro" id="IPR045869">
    <property type="entry name" value="Arna-like_SDR_e"/>
</dbReference>
<dbReference type="InterPro" id="IPR021168">
    <property type="entry name" value="Bifun_polymyxin_resist_ArnA"/>
</dbReference>
<dbReference type="InterPro" id="IPR001509">
    <property type="entry name" value="Epimerase_deHydtase"/>
</dbReference>
<dbReference type="InterPro" id="IPR005793">
    <property type="entry name" value="Formyl_trans_C"/>
</dbReference>
<dbReference type="InterPro" id="IPR002376">
    <property type="entry name" value="Formyl_transf_N"/>
</dbReference>
<dbReference type="InterPro" id="IPR036477">
    <property type="entry name" value="Formyl_transf_N_sf"/>
</dbReference>
<dbReference type="InterPro" id="IPR011034">
    <property type="entry name" value="Formyl_transferase-like_C_sf"/>
</dbReference>
<dbReference type="InterPro" id="IPR050177">
    <property type="entry name" value="Lipid_A_modif_metabolic_enz"/>
</dbReference>
<dbReference type="InterPro" id="IPR036291">
    <property type="entry name" value="NAD(P)-bd_dom_sf"/>
</dbReference>
<dbReference type="NCBIfam" id="NF005414">
    <property type="entry name" value="PRK06988.1"/>
    <property type="match status" value="1"/>
</dbReference>
<dbReference type="NCBIfam" id="NF005998">
    <property type="entry name" value="PRK08125.1"/>
    <property type="match status" value="1"/>
</dbReference>
<dbReference type="NCBIfam" id="NF008872">
    <property type="entry name" value="PRK11908.1"/>
    <property type="match status" value="1"/>
</dbReference>
<dbReference type="PANTHER" id="PTHR43245">
    <property type="entry name" value="BIFUNCTIONAL POLYMYXIN RESISTANCE PROTEIN ARNA"/>
    <property type="match status" value="1"/>
</dbReference>
<dbReference type="PANTHER" id="PTHR43245:SF13">
    <property type="entry name" value="UDP-D-APIOSE_UDP-D-XYLOSE SYNTHASE 2"/>
    <property type="match status" value="1"/>
</dbReference>
<dbReference type="Pfam" id="PF01370">
    <property type="entry name" value="Epimerase"/>
    <property type="match status" value="1"/>
</dbReference>
<dbReference type="Pfam" id="PF02911">
    <property type="entry name" value="Formyl_trans_C"/>
    <property type="match status" value="1"/>
</dbReference>
<dbReference type="Pfam" id="PF00551">
    <property type="entry name" value="Formyl_trans_N"/>
    <property type="match status" value="1"/>
</dbReference>
<dbReference type="PIRSF" id="PIRSF036506">
    <property type="entry name" value="Bifun_polymyxin_resist_ArnA"/>
    <property type="match status" value="1"/>
</dbReference>
<dbReference type="SUPFAM" id="SSF50486">
    <property type="entry name" value="FMT C-terminal domain-like"/>
    <property type="match status" value="1"/>
</dbReference>
<dbReference type="SUPFAM" id="SSF53328">
    <property type="entry name" value="Formyltransferase"/>
    <property type="match status" value="1"/>
</dbReference>
<dbReference type="SUPFAM" id="SSF51735">
    <property type="entry name" value="NAD(P)-binding Rossmann-fold domains"/>
    <property type="match status" value="1"/>
</dbReference>
<comment type="function">
    <text evidence="1">Bifunctional enzyme that catalyzes the oxidative decarboxylation of UDP-glucuronic acid (UDP-GlcUA) to UDP-4-keto-arabinose (UDP-Ara4O) and the addition of a formyl group to UDP-4-amino-4-deoxy-L-arabinose (UDP-L-Ara4N) to form UDP-L-4-formamido-arabinose (UDP-L-Ara4FN). The modified arabinose is attached to lipid A and is required for resistance to polymyxin and cationic antimicrobial peptides.</text>
</comment>
<comment type="catalytic activity">
    <reaction evidence="1">
        <text>UDP-alpha-D-glucuronate + NAD(+) = UDP-beta-L-threo-pentopyranos-4-ulose + CO2 + NADH</text>
        <dbReference type="Rhea" id="RHEA:24702"/>
        <dbReference type="ChEBI" id="CHEBI:16526"/>
        <dbReference type="ChEBI" id="CHEBI:57540"/>
        <dbReference type="ChEBI" id="CHEBI:57945"/>
        <dbReference type="ChEBI" id="CHEBI:58052"/>
        <dbReference type="ChEBI" id="CHEBI:58710"/>
        <dbReference type="EC" id="1.1.1.305"/>
    </reaction>
</comment>
<comment type="catalytic activity">
    <reaction evidence="1">
        <text>UDP-4-amino-4-deoxy-beta-L-arabinose + (6R)-10-formyltetrahydrofolate = UDP-4-deoxy-4-formamido-beta-L-arabinose + (6S)-5,6,7,8-tetrahydrofolate + H(+)</text>
        <dbReference type="Rhea" id="RHEA:24706"/>
        <dbReference type="ChEBI" id="CHEBI:15378"/>
        <dbReference type="ChEBI" id="CHEBI:57453"/>
        <dbReference type="ChEBI" id="CHEBI:58708"/>
        <dbReference type="ChEBI" id="CHEBI:58709"/>
        <dbReference type="ChEBI" id="CHEBI:195366"/>
        <dbReference type="EC" id="2.1.2.13"/>
    </reaction>
</comment>
<comment type="pathway">
    <text evidence="1">Nucleotide-sugar biosynthesis; UDP-4-deoxy-4-formamido-beta-L-arabinose biosynthesis; UDP-4-deoxy-4-formamido-beta-L-arabinose from UDP-alpha-D-glucuronate: step 1/3.</text>
</comment>
<comment type="pathway">
    <text evidence="1">Nucleotide-sugar biosynthesis; UDP-4-deoxy-4-formamido-beta-L-arabinose biosynthesis; UDP-4-deoxy-4-formamido-beta-L-arabinose from UDP-alpha-D-glucuronate: step 3/3.</text>
</comment>
<comment type="pathway">
    <text evidence="1">Bacterial outer membrane biogenesis; lipopolysaccharide biosynthesis.</text>
</comment>
<comment type="subunit">
    <text evidence="1">Homohexamer, formed by a dimer of trimers.</text>
</comment>
<comment type="similarity">
    <text evidence="1">In the N-terminal section; belongs to the Fmt family. UDP-L-Ara4N formyltransferase subfamily.</text>
</comment>
<comment type="similarity">
    <text evidence="1">In the C-terminal section; belongs to the NAD(P)-dependent epimerase/dehydratase family. UDP-glucuronic acid decarboxylase subfamily.</text>
</comment>
<proteinExistence type="inferred from homology"/>
<accession>B1IXT2</accession>
<organism>
    <name type="scientific">Escherichia coli (strain ATCC 8739 / DSM 1576 / NBRC 3972 / NCIMB 8545 / WDCM 00012 / Crooks)</name>
    <dbReference type="NCBI Taxonomy" id="481805"/>
    <lineage>
        <taxon>Bacteria</taxon>
        <taxon>Pseudomonadati</taxon>
        <taxon>Pseudomonadota</taxon>
        <taxon>Gammaproteobacteria</taxon>
        <taxon>Enterobacterales</taxon>
        <taxon>Enterobacteriaceae</taxon>
        <taxon>Escherichia</taxon>
    </lineage>
</organism>
<protein>
    <recommendedName>
        <fullName evidence="1">Bifunctional polymyxin resistance protein ArnA</fullName>
    </recommendedName>
    <domain>
        <recommendedName>
            <fullName evidence="1">UDP-4-amino-4-deoxy-L-arabinose formyltransferase</fullName>
            <ecNumber evidence="1">2.1.2.13</ecNumber>
        </recommendedName>
        <alternativeName>
            <fullName evidence="1">ArnAFT</fullName>
        </alternativeName>
        <alternativeName>
            <fullName evidence="1">UDP-L-Ara4N formyltransferase</fullName>
        </alternativeName>
    </domain>
    <domain>
        <recommendedName>
            <fullName evidence="1">UDP-glucuronic acid oxidase, UDP-4-keto-hexauronic acid decarboxylating</fullName>
            <ecNumber evidence="1">1.1.1.305</ecNumber>
        </recommendedName>
        <alternativeName>
            <fullName evidence="1">ArnADH</fullName>
        </alternativeName>
        <alternativeName>
            <fullName evidence="1">UDP-GlcUA decarboxylase</fullName>
        </alternativeName>
        <alternativeName>
            <fullName evidence="1">UDP-glucuronic acid dehydrogenase</fullName>
        </alternativeName>
    </domain>
</protein>
<feature type="chain" id="PRO_1000085380" description="Bifunctional polymyxin resistance protein ArnA">
    <location>
        <begin position="1"/>
        <end position="660"/>
    </location>
</feature>
<feature type="region of interest" description="Formyltransferase ArnAFT">
    <location>
        <begin position="1"/>
        <end position="304"/>
    </location>
</feature>
<feature type="region of interest" description="Dehydrogenase ArnADH">
    <location>
        <begin position="314"/>
        <end position="660"/>
    </location>
</feature>
<feature type="active site" description="Proton donor; for formyltransferase activity" evidence="1">
    <location>
        <position position="104"/>
    </location>
</feature>
<feature type="active site" description="Proton acceptor; for decarboxylase activity" evidence="1">
    <location>
        <position position="434"/>
    </location>
</feature>
<feature type="active site" description="Proton donor; for decarboxylase activity" evidence="1">
    <location>
        <position position="619"/>
    </location>
</feature>
<feature type="binding site" evidence="1">
    <location>
        <begin position="86"/>
        <end position="88"/>
    </location>
    <ligand>
        <name>(6R)-10-formyltetrahydrofolate</name>
        <dbReference type="ChEBI" id="CHEBI:195366"/>
    </ligand>
</feature>
<feature type="binding site" evidence="1">
    <location>
        <position position="114"/>
    </location>
    <ligand>
        <name>(6R)-10-formyltetrahydrofolate</name>
        <dbReference type="ChEBI" id="CHEBI:195366"/>
    </ligand>
</feature>
<feature type="binding site" evidence="1">
    <location>
        <begin position="136"/>
        <end position="140"/>
    </location>
    <ligand>
        <name>(6R)-10-formyltetrahydrofolate</name>
        <dbReference type="ChEBI" id="CHEBI:195366"/>
    </ligand>
</feature>
<feature type="binding site" evidence="1">
    <location>
        <position position="347"/>
    </location>
    <ligand>
        <name>NAD(+)</name>
        <dbReference type="ChEBI" id="CHEBI:57540"/>
    </ligand>
</feature>
<feature type="binding site" evidence="1">
    <location>
        <begin position="368"/>
        <end position="369"/>
    </location>
    <ligand>
        <name>NAD(+)</name>
        <dbReference type="ChEBI" id="CHEBI:57540"/>
    </ligand>
</feature>
<feature type="binding site" evidence="1">
    <location>
        <position position="393"/>
    </location>
    <ligand>
        <name>UDP-alpha-D-glucuronate</name>
        <dbReference type="ChEBI" id="CHEBI:58052"/>
    </ligand>
</feature>
<feature type="binding site" evidence="1">
    <location>
        <position position="398"/>
    </location>
    <ligand>
        <name>UDP-alpha-D-glucuronate</name>
        <dbReference type="ChEBI" id="CHEBI:58052"/>
    </ligand>
</feature>
<feature type="binding site" evidence="1">
    <location>
        <begin position="432"/>
        <end position="433"/>
    </location>
    <ligand>
        <name>UDP-alpha-D-glucuronate</name>
        <dbReference type="ChEBI" id="CHEBI:58052"/>
    </ligand>
</feature>
<feature type="binding site" evidence="1">
    <location>
        <position position="460"/>
    </location>
    <ligand>
        <name>UDP-alpha-D-glucuronate</name>
        <dbReference type="ChEBI" id="CHEBI:58052"/>
    </ligand>
</feature>
<feature type="binding site" evidence="1">
    <location>
        <position position="492"/>
    </location>
    <ligand>
        <name>UDP-alpha-D-glucuronate</name>
        <dbReference type="ChEBI" id="CHEBI:58052"/>
    </ligand>
</feature>
<feature type="binding site" evidence="1">
    <location>
        <begin position="526"/>
        <end position="535"/>
    </location>
    <ligand>
        <name>UDP-alpha-D-glucuronate</name>
        <dbReference type="ChEBI" id="CHEBI:58052"/>
    </ligand>
</feature>
<feature type="binding site" evidence="1">
    <location>
        <position position="613"/>
    </location>
    <ligand>
        <name>UDP-alpha-D-glucuronate</name>
        <dbReference type="ChEBI" id="CHEBI:58052"/>
    </ligand>
</feature>
<feature type="site" description="Transition state stabilizer" evidence="1">
    <location>
        <position position="102"/>
    </location>
</feature>
<feature type="site" description="Raises pKa of active site His" evidence="1">
    <location>
        <position position="140"/>
    </location>
</feature>
<sequence>MKTVVFAYHDMGCLGIEALLAAGYEISAIFTHTDNPGEKAFYGSVARLAAERGIPVYAPDNVNHPLWVERIAQLSPDVIFSFYYRHLIYDEILQLAPAGAFNLHGSLLPKYRGRAPLNWVLVNGETETGVTLHRMVKRADAGAIVAQLRIAIAPDDIAITLHHKLCHAARQLLEQTLPAIKHGNILEIAQRENEATCFGRRTPDDSFLEWHKPASVLHNMVRAVADPWPGAFSYVGNQKFTVWSSRVHPHASKAQPGSVISVAPLLIACGDGALEIVTGQAGDGITMQGSQLAQTLGLVQGSRLNSQPACTARRRTRVLILGVNGFIGNHLTERLLREDHYEVYGLDIGSDAISRFLNHPHFHFVEGDISIHSEWIEYHVKKCDVVLPLVAIATPIEYTRNPLRVFELDFEENLRIIRYCVKYRKRIIFPSTSEVYGMCSDKYFDEDHSNLIVGPVNKPRWIYSVSKQLLDRVIWAYGEKEGLQFTLFRPFNWMGPRLDNLNAARIGSSRAITQLILNLVEGSPIKLIDGGKQKRCFTDIRDGIEALYRIIENAGNRCDGEIINIGNPENEASIEELGEMLLASFEKHPLRHHFPPFAGFRVVESSSYYGKGYQDVEHRKPSIRNAHRCLDWEPKIDMQETIDETLDFFLRTVDLTDKPS</sequence>
<evidence type="ECO:0000255" key="1">
    <source>
        <dbReference type="HAMAP-Rule" id="MF_01166"/>
    </source>
</evidence>